<sequence>MFRTEDSILPPLEWLSDNNSSVPPAIYDWLMELGSMTLRFERYCTRVHVEPRHEYFIARNELKEEAEHLPESSLYWLREVVLMGDNQPWLLGRTVIPQETLAHHSNALMNLGTLPLGRYLFSNGELTRDYIHIGRKDSLWARRSRLRLSGKPLLLTELFLADSPLYTEDPS</sequence>
<comment type="function">
    <text evidence="1">Removes the pyruvyl group from chorismate, with concomitant aromatization of the ring, to provide 4-hydroxybenzoate (4HB) for the ubiquinone pathway.</text>
</comment>
<comment type="catalytic activity">
    <reaction evidence="1">
        <text>chorismate = 4-hydroxybenzoate + pyruvate</text>
        <dbReference type="Rhea" id="RHEA:16505"/>
        <dbReference type="ChEBI" id="CHEBI:15361"/>
        <dbReference type="ChEBI" id="CHEBI:17879"/>
        <dbReference type="ChEBI" id="CHEBI:29748"/>
        <dbReference type="EC" id="4.1.3.40"/>
    </reaction>
</comment>
<comment type="pathway">
    <text evidence="1">Cofactor biosynthesis; ubiquinone biosynthesis.</text>
</comment>
<comment type="subcellular location">
    <subcellularLocation>
        <location evidence="1">Cytoplasm</location>
    </subcellularLocation>
</comment>
<comment type="similarity">
    <text evidence="1">Belongs to the UbiC family.</text>
</comment>
<proteinExistence type="inferred from homology"/>
<feature type="chain" id="PRO_0000292063" description="Probable chorismate pyruvate-lyase">
    <location>
        <begin position="1"/>
        <end position="171"/>
    </location>
</feature>
<feature type="binding site" evidence="1">
    <location>
        <position position="36"/>
    </location>
    <ligand>
        <name>substrate</name>
    </ligand>
</feature>
<feature type="binding site" evidence="1">
    <location>
        <position position="78"/>
    </location>
    <ligand>
        <name>substrate</name>
    </ligand>
</feature>
<feature type="binding site" evidence="1">
    <location>
        <position position="116"/>
    </location>
    <ligand>
        <name>substrate</name>
    </ligand>
</feature>
<feature type="binding site" evidence="1">
    <location>
        <position position="157"/>
    </location>
    <ligand>
        <name>substrate</name>
    </ligand>
</feature>
<evidence type="ECO:0000255" key="1">
    <source>
        <dbReference type="HAMAP-Rule" id="MF_01632"/>
    </source>
</evidence>
<organism>
    <name type="scientific">Bartonella bacilliformis (strain ATCC 35685 / KC583 / Herrer 020/F12,63)</name>
    <dbReference type="NCBI Taxonomy" id="360095"/>
    <lineage>
        <taxon>Bacteria</taxon>
        <taxon>Pseudomonadati</taxon>
        <taxon>Pseudomonadota</taxon>
        <taxon>Alphaproteobacteria</taxon>
        <taxon>Hyphomicrobiales</taxon>
        <taxon>Bartonellaceae</taxon>
        <taxon>Bartonella</taxon>
    </lineage>
</organism>
<name>UBIC_BARBK</name>
<keyword id="KW-0963">Cytoplasm</keyword>
<keyword id="KW-0456">Lyase</keyword>
<keyword id="KW-0670">Pyruvate</keyword>
<keyword id="KW-0831">Ubiquinone biosynthesis</keyword>
<accession>A1UTE7</accession>
<dbReference type="EC" id="4.1.3.40" evidence="1"/>
<dbReference type="EMBL" id="CP000524">
    <property type="protein sequence ID" value="ABM44670.1"/>
    <property type="molecule type" value="Genomic_DNA"/>
</dbReference>
<dbReference type="SMR" id="A1UTE7"/>
<dbReference type="STRING" id="360095.BARBAKC583_0971"/>
<dbReference type="KEGG" id="bbk:BARBAKC583_0971"/>
<dbReference type="eggNOG" id="COG3161">
    <property type="taxonomic scope" value="Bacteria"/>
</dbReference>
<dbReference type="HOGENOM" id="CLU_096824_1_0_5"/>
<dbReference type="UniPathway" id="UPA00232"/>
<dbReference type="Proteomes" id="UP000000643">
    <property type="component" value="Chromosome"/>
</dbReference>
<dbReference type="GO" id="GO:0005829">
    <property type="term" value="C:cytosol"/>
    <property type="evidence" value="ECO:0007669"/>
    <property type="project" value="TreeGrafter"/>
</dbReference>
<dbReference type="GO" id="GO:0008813">
    <property type="term" value="F:chorismate lyase activity"/>
    <property type="evidence" value="ECO:0007669"/>
    <property type="project" value="UniProtKB-UniRule"/>
</dbReference>
<dbReference type="GO" id="GO:0042866">
    <property type="term" value="P:pyruvate biosynthetic process"/>
    <property type="evidence" value="ECO:0007669"/>
    <property type="project" value="UniProtKB-UniRule"/>
</dbReference>
<dbReference type="GO" id="GO:0006744">
    <property type="term" value="P:ubiquinone biosynthetic process"/>
    <property type="evidence" value="ECO:0007669"/>
    <property type="project" value="UniProtKB-UniRule"/>
</dbReference>
<dbReference type="Gene3D" id="3.40.1410.10">
    <property type="entry name" value="Chorismate lyase-like"/>
    <property type="match status" value="1"/>
</dbReference>
<dbReference type="HAMAP" id="MF_01632">
    <property type="entry name" value="UbiC"/>
    <property type="match status" value="1"/>
</dbReference>
<dbReference type="InterPro" id="IPR007440">
    <property type="entry name" value="Chorismate--pyruvate_lyase"/>
</dbReference>
<dbReference type="InterPro" id="IPR028978">
    <property type="entry name" value="Chorismate_lyase_/UTRA_dom_sf"/>
</dbReference>
<dbReference type="NCBIfam" id="NF008656">
    <property type="entry name" value="PRK11655.1"/>
    <property type="match status" value="1"/>
</dbReference>
<dbReference type="PANTHER" id="PTHR38683">
    <property type="entry name" value="CHORISMATE PYRUVATE-LYASE"/>
    <property type="match status" value="1"/>
</dbReference>
<dbReference type="PANTHER" id="PTHR38683:SF1">
    <property type="entry name" value="CHORISMATE PYRUVATE-LYASE"/>
    <property type="match status" value="1"/>
</dbReference>
<dbReference type="Pfam" id="PF04345">
    <property type="entry name" value="Chor_lyase"/>
    <property type="match status" value="1"/>
</dbReference>
<dbReference type="SUPFAM" id="SSF64288">
    <property type="entry name" value="Chorismate lyase-like"/>
    <property type="match status" value="1"/>
</dbReference>
<protein>
    <recommendedName>
        <fullName evidence="1">Probable chorismate pyruvate-lyase</fullName>
        <shortName evidence="1">CL</shortName>
        <shortName evidence="1">CPL</shortName>
        <ecNumber evidence="1">4.1.3.40</ecNumber>
    </recommendedName>
</protein>
<reference key="1">
    <citation type="submission" date="2006-12" db="EMBL/GenBank/DDBJ databases">
        <authorList>
            <person name="Hendrix L."/>
            <person name="Mohamoud Y."/>
            <person name="Radune D."/>
            <person name="Shvartsbeyn A."/>
            <person name="Daugherty S."/>
            <person name="Dodson R."/>
            <person name="Durkin A.S."/>
            <person name="Harkins D."/>
            <person name="Huot H."/>
            <person name="Kothari S.P."/>
            <person name="Madupu R."/>
            <person name="Li J."/>
            <person name="Nelson W.C."/>
            <person name="Shrivastava S."/>
            <person name="Giglio M.G."/>
            <person name="Haft D."/>
            <person name="Selengut J."/>
            <person name="Fraser-Ligget C."/>
            <person name="Seshadri R."/>
        </authorList>
    </citation>
    <scope>NUCLEOTIDE SEQUENCE [LARGE SCALE GENOMIC DNA]</scope>
    <source>
        <strain>ATCC 35685 / KC583 / Herrer 020/F12,63</strain>
    </source>
</reference>
<gene>
    <name evidence="1" type="primary">ubiC</name>
    <name type="ordered locus">BARBAKC583_0971</name>
</gene>